<name>TRPA_PROM1</name>
<reference key="1">
    <citation type="journal article" date="2007" name="PLoS Genet.">
        <title>Patterns and implications of gene gain and loss in the evolution of Prochlorococcus.</title>
        <authorList>
            <person name="Kettler G.C."/>
            <person name="Martiny A.C."/>
            <person name="Huang K."/>
            <person name="Zucker J."/>
            <person name="Coleman M.L."/>
            <person name="Rodrigue S."/>
            <person name="Chen F."/>
            <person name="Lapidus A."/>
            <person name="Ferriera S."/>
            <person name="Johnson J."/>
            <person name="Steglich C."/>
            <person name="Church G.M."/>
            <person name="Richardson P."/>
            <person name="Chisholm S.W."/>
        </authorList>
    </citation>
    <scope>NUCLEOTIDE SEQUENCE [LARGE SCALE GENOMIC DNA]</scope>
    <source>
        <strain>NATL1A</strain>
    </source>
</reference>
<proteinExistence type="inferred from homology"/>
<keyword id="KW-0028">Amino-acid biosynthesis</keyword>
<keyword id="KW-0057">Aromatic amino acid biosynthesis</keyword>
<keyword id="KW-0456">Lyase</keyword>
<keyword id="KW-0822">Tryptophan biosynthesis</keyword>
<dbReference type="EC" id="4.2.1.20" evidence="1"/>
<dbReference type="EMBL" id="CP000553">
    <property type="protein sequence ID" value="ABM75189.1"/>
    <property type="molecule type" value="Genomic_DNA"/>
</dbReference>
<dbReference type="RefSeq" id="WP_011823354.1">
    <property type="nucleotide sequence ID" value="NC_008819.1"/>
</dbReference>
<dbReference type="SMR" id="A2C129"/>
<dbReference type="KEGG" id="pme:NATL1_06271"/>
<dbReference type="eggNOG" id="COG0159">
    <property type="taxonomic scope" value="Bacteria"/>
</dbReference>
<dbReference type="HOGENOM" id="CLU_016734_0_2_3"/>
<dbReference type="UniPathway" id="UPA00035">
    <property type="reaction ID" value="UER00044"/>
</dbReference>
<dbReference type="Proteomes" id="UP000002592">
    <property type="component" value="Chromosome"/>
</dbReference>
<dbReference type="GO" id="GO:0005829">
    <property type="term" value="C:cytosol"/>
    <property type="evidence" value="ECO:0007669"/>
    <property type="project" value="TreeGrafter"/>
</dbReference>
<dbReference type="GO" id="GO:0004834">
    <property type="term" value="F:tryptophan synthase activity"/>
    <property type="evidence" value="ECO:0007669"/>
    <property type="project" value="UniProtKB-UniRule"/>
</dbReference>
<dbReference type="CDD" id="cd04724">
    <property type="entry name" value="Tryptophan_synthase_alpha"/>
    <property type="match status" value="1"/>
</dbReference>
<dbReference type="FunFam" id="3.20.20.70:FF:000037">
    <property type="entry name" value="Tryptophan synthase alpha chain"/>
    <property type="match status" value="1"/>
</dbReference>
<dbReference type="Gene3D" id="3.20.20.70">
    <property type="entry name" value="Aldolase class I"/>
    <property type="match status" value="1"/>
</dbReference>
<dbReference type="HAMAP" id="MF_00131">
    <property type="entry name" value="Trp_synth_alpha"/>
    <property type="match status" value="1"/>
</dbReference>
<dbReference type="InterPro" id="IPR013785">
    <property type="entry name" value="Aldolase_TIM"/>
</dbReference>
<dbReference type="InterPro" id="IPR011060">
    <property type="entry name" value="RibuloseP-bd_barrel"/>
</dbReference>
<dbReference type="InterPro" id="IPR018204">
    <property type="entry name" value="Trp_synthase_alpha_AS"/>
</dbReference>
<dbReference type="InterPro" id="IPR002028">
    <property type="entry name" value="Trp_synthase_suA"/>
</dbReference>
<dbReference type="NCBIfam" id="TIGR00262">
    <property type="entry name" value="trpA"/>
    <property type="match status" value="1"/>
</dbReference>
<dbReference type="PANTHER" id="PTHR43406:SF1">
    <property type="entry name" value="TRYPTOPHAN SYNTHASE ALPHA CHAIN, CHLOROPLASTIC"/>
    <property type="match status" value="1"/>
</dbReference>
<dbReference type="PANTHER" id="PTHR43406">
    <property type="entry name" value="TRYPTOPHAN SYNTHASE, ALPHA CHAIN"/>
    <property type="match status" value="1"/>
</dbReference>
<dbReference type="Pfam" id="PF00290">
    <property type="entry name" value="Trp_syntA"/>
    <property type="match status" value="1"/>
</dbReference>
<dbReference type="SUPFAM" id="SSF51366">
    <property type="entry name" value="Ribulose-phoshate binding barrel"/>
    <property type="match status" value="1"/>
</dbReference>
<dbReference type="PROSITE" id="PS00167">
    <property type="entry name" value="TRP_SYNTHASE_ALPHA"/>
    <property type="match status" value="1"/>
</dbReference>
<protein>
    <recommendedName>
        <fullName evidence="1">Tryptophan synthase alpha chain</fullName>
        <ecNumber evidence="1">4.2.1.20</ecNumber>
    </recommendedName>
</protein>
<feature type="chain" id="PRO_1000018249" description="Tryptophan synthase alpha chain">
    <location>
        <begin position="1"/>
        <end position="266"/>
    </location>
</feature>
<feature type="active site" description="Proton acceptor" evidence="1">
    <location>
        <position position="51"/>
    </location>
</feature>
<feature type="active site" description="Proton acceptor" evidence="1">
    <location>
        <position position="62"/>
    </location>
</feature>
<organism>
    <name type="scientific">Prochlorococcus marinus (strain NATL1A)</name>
    <dbReference type="NCBI Taxonomy" id="167555"/>
    <lineage>
        <taxon>Bacteria</taxon>
        <taxon>Bacillati</taxon>
        <taxon>Cyanobacteriota</taxon>
        <taxon>Cyanophyceae</taxon>
        <taxon>Synechococcales</taxon>
        <taxon>Prochlorococcaceae</taxon>
        <taxon>Prochlorococcus</taxon>
    </lineage>
</organism>
<comment type="function">
    <text evidence="1">The alpha subunit is responsible for the aldol cleavage of indoleglycerol phosphate to indole and glyceraldehyde 3-phosphate.</text>
</comment>
<comment type="catalytic activity">
    <reaction evidence="1">
        <text>(1S,2R)-1-C-(indol-3-yl)glycerol 3-phosphate + L-serine = D-glyceraldehyde 3-phosphate + L-tryptophan + H2O</text>
        <dbReference type="Rhea" id="RHEA:10532"/>
        <dbReference type="ChEBI" id="CHEBI:15377"/>
        <dbReference type="ChEBI" id="CHEBI:33384"/>
        <dbReference type="ChEBI" id="CHEBI:57912"/>
        <dbReference type="ChEBI" id="CHEBI:58866"/>
        <dbReference type="ChEBI" id="CHEBI:59776"/>
        <dbReference type="EC" id="4.2.1.20"/>
    </reaction>
</comment>
<comment type="pathway">
    <text evidence="1">Amino-acid biosynthesis; L-tryptophan biosynthesis; L-tryptophan from chorismate: step 5/5.</text>
</comment>
<comment type="subunit">
    <text evidence="1">Tetramer of two alpha and two beta chains.</text>
</comment>
<comment type="similarity">
    <text evidence="1">Belongs to the TrpA family.</text>
</comment>
<gene>
    <name evidence="1" type="primary">trpA</name>
    <name type="ordered locus">NATL1_06271</name>
</gene>
<accession>A2C129</accession>
<sequence length="266" mass="28696">MKSTNISRSFSKIKKEKRIALMPFLMAGDPDLETTAKILLELQANGADMIELGIPYSDPLADGPIIQLAASRALSAGTSPDRVFKMLFELRDQLKIPIILFTYSNPLINKGLEEFCWQASKVGVSGLVVPDLPLEEAEKLSDIAESKEIDLVLLVAPTTPKDRMKKIAATSNGFTYLVSVTGVTGERSSLEDNVGSLVQQLKDSSSSPIAVGFGISDVKHIEQVREWGADGAIVGSALVKRIANASIEMKVEEAGSFCKELRAATN</sequence>
<evidence type="ECO:0000255" key="1">
    <source>
        <dbReference type="HAMAP-Rule" id="MF_00131"/>
    </source>
</evidence>